<proteinExistence type="inferred from homology"/>
<keyword id="KW-0131">Cell cycle</keyword>
<keyword id="KW-0132">Cell division</keyword>
<keyword id="KW-0963">Cytoplasm</keyword>
<keyword id="KW-0717">Septation</keyword>
<sequence>MSWSKVKYFFFDTPEEKEAAQYSYEKEQTDMKKQQDPPEQQDVTFPKAQPKQNVVSIETAKQSSKVVLLEPRTYSEAQGIADHLKGRRAVVINLQRMSTDQAVRIVDFLSGTVYAIGGDIQKIGPKTFMCTPENVDIVGAISELFGEEEDTNIKRW</sequence>
<organism>
    <name type="scientific">Bacillus cereus (strain 03BB102)</name>
    <dbReference type="NCBI Taxonomy" id="572264"/>
    <lineage>
        <taxon>Bacteria</taxon>
        <taxon>Bacillati</taxon>
        <taxon>Bacillota</taxon>
        <taxon>Bacilli</taxon>
        <taxon>Bacillales</taxon>
        <taxon>Bacillaceae</taxon>
        <taxon>Bacillus</taxon>
        <taxon>Bacillus cereus group</taxon>
    </lineage>
</organism>
<evidence type="ECO:0000255" key="1">
    <source>
        <dbReference type="HAMAP-Rule" id="MF_01197"/>
    </source>
</evidence>
<evidence type="ECO:0000256" key="2">
    <source>
        <dbReference type="SAM" id="MobiDB-lite"/>
    </source>
</evidence>
<feature type="chain" id="PRO_1000164526" description="Cell division protein SepF">
    <location>
        <begin position="1"/>
        <end position="156"/>
    </location>
</feature>
<feature type="region of interest" description="Disordered" evidence="2">
    <location>
        <begin position="23"/>
        <end position="50"/>
    </location>
</feature>
<feature type="compositionally biased region" description="Basic and acidic residues" evidence="2">
    <location>
        <begin position="23"/>
        <end position="36"/>
    </location>
</feature>
<protein>
    <recommendedName>
        <fullName evidence="1">Cell division protein SepF</fullName>
    </recommendedName>
</protein>
<gene>
    <name evidence="1" type="primary">sepF</name>
    <name type="ordered locus">BCA_4003</name>
</gene>
<accession>C1EPR3</accession>
<name>SEPF_BACC3</name>
<comment type="function">
    <text evidence="1">Cell division protein that is part of the divisome complex and is recruited early to the Z-ring. Probably stimulates Z-ring formation, perhaps through the cross-linking of FtsZ protofilaments. Its function overlaps with FtsA.</text>
</comment>
<comment type="subunit">
    <text evidence="1">Homodimer. Interacts with FtsZ.</text>
</comment>
<comment type="subcellular location">
    <subcellularLocation>
        <location evidence="1">Cytoplasm</location>
    </subcellularLocation>
    <text evidence="1">Localizes to the division site, in a FtsZ-dependent manner.</text>
</comment>
<comment type="similarity">
    <text evidence="1">Belongs to the SepF family.</text>
</comment>
<dbReference type="EMBL" id="CP001407">
    <property type="protein sequence ID" value="ACO26002.1"/>
    <property type="molecule type" value="Genomic_DNA"/>
</dbReference>
<dbReference type="RefSeq" id="WP_000119136.1">
    <property type="nucleotide sequence ID" value="NZ_CP009318.1"/>
</dbReference>
<dbReference type="SMR" id="C1EPR3"/>
<dbReference type="KEGG" id="bcx:BCA_4003"/>
<dbReference type="PATRIC" id="fig|572264.18.peg.3956"/>
<dbReference type="Proteomes" id="UP000002210">
    <property type="component" value="Chromosome"/>
</dbReference>
<dbReference type="GO" id="GO:0005737">
    <property type="term" value="C:cytoplasm"/>
    <property type="evidence" value="ECO:0007669"/>
    <property type="project" value="UniProtKB-SubCell"/>
</dbReference>
<dbReference type="GO" id="GO:0000917">
    <property type="term" value="P:division septum assembly"/>
    <property type="evidence" value="ECO:0007669"/>
    <property type="project" value="UniProtKB-KW"/>
</dbReference>
<dbReference type="GO" id="GO:0043093">
    <property type="term" value="P:FtsZ-dependent cytokinesis"/>
    <property type="evidence" value="ECO:0007669"/>
    <property type="project" value="UniProtKB-UniRule"/>
</dbReference>
<dbReference type="Gene3D" id="3.30.110.150">
    <property type="entry name" value="SepF-like protein"/>
    <property type="match status" value="1"/>
</dbReference>
<dbReference type="HAMAP" id="MF_01197">
    <property type="entry name" value="SepF"/>
    <property type="match status" value="1"/>
</dbReference>
<dbReference type="InterPro" id="IPR023052">
    <property type="entry name" value="Cell_div_SepF"/>
</dbReference>
<dbReference type="InterPro" id="IPR007561">
    <property type="entry name" value="Cell_div_SepF/SepF-rel"/>
</dbReference>
<dbReference type="InterPro" id="IPR038594">
    <property type="entry name" value="SepF-like_sf"/>
</dbReference>
<dbReference type="PANTHER" id="PTHR35798">
    <property type="entry name" value="CELL DIVISION PROTEIN SEPF"/>
    <property type="match status" value="1"/>
</dbReference>
<dbReference type="PANTHER" id="PTHR35798:SF1">
    <property type="entry name" value="CELL DIVISION PROTEIN SEPF"/>
    <property type="match status" value="1"/>
</dbReference>
<dbReference type="Pfam" id="PF04472">
    <property type="entry name" value="SepF"/>
    <property type="match status" value="1"/>
</dbReference>
<reference key="1">
    <citation type="submission" date="2009-02" db="EMBL/GenBank/DDBJ databases">
        <title>Genome sequence of Bacillus cereus 03BB102.</title>
        <authorList>
            <person name="Dodson R.J."/>
            <person name="Jackson P."/>
            <person name="Munk A.C."/>
            <person name="Brettin T."/>
            <person name="Bruce D."/>
            <person name="Detter C."/>
            <person name="Tapia R."/>
            <person name="Han C."/>
            <person name="Sutton G."/>
            <person name="Sims D."/>
        </authorList>
    </citation>
    <scope>NUCLEOTIDE SEQUENCE [LARGE SCALE GENOMIC DNA]</scope>
    <source>
        <strain>03BB102</strain>
    </source>
</reference>